<feature type="chain" id="PRO_1000045216" description="5-oxoprolinase subunit A">
    <location>
        <begin position="1"/>
        <end position="246"/>
    </location>
</feature>
<reference key="1">
    <citation type="journal article" date="2010" name="PLoS ONE">
        <title>The complete multipartite genome sequence of Cupriavidus necator JMP134, a versatile pollutant degrader.</title>
        <authorList>
            <person name="Lykidis A."/>
            <person name="Perez-Pantoja D."/>
            <person name="Ledger T."/>
            <person name="Mavromatis K."/>
            <person name="Anderson I.J."/>
            <person name="Ivanova N.N."/>
            <person name="Hooper S.D."/>
            <person name="Lapidus A."/>
            <person name="Lucas S."/>
            <person name="Gonzalez B."/>
            <person name="Kyrpides N.C."/>
        </authorList>
    </citation>
    <scope>NUCLEOTIDE SEQUENCE [LARGE SCALE GENOMIC DNA]</scope>
    <source>
        <strain>JMP134 / LMG 1197</strain>
    </source>
</reference>
<evidence type="ECO:0000255" key="1">
    <source>
        <dbReference type="HAMAP-Rule" id="MF_00691"/>
    </source>
</evidence>
<gene>
    <name evidence="1" type="primary">pxpA</name>
    <name type="ordered locus">Reut_A0089</name>
</gene>
<dbReference type="EC" id="3.5.2.9" evidence="1"/>
<dbReference type="EMBL" id="CP000090">
    <property type="protein sequence ID" value="AAZ59471.1"/>
    <property type="molecule type" value="Genomic_DNA"/>
</dbReference>
<dbReference type="SMR" id="Q477G2"/>
<dbReference type="STRING" id="264198.Reut_A0089"/>
<dbReference type="KEGG" id="reu:Reut_A0089"/>
<dbReference type="eggNOG" id="COG1540">
    <property type="taxonomic scope" value="Bacteria"/>
</dbReference>
<dbReference type="HOGENOM" id="CLU_069535_0_0_4"/>
<dbReference type="OrthoDB" id="9773478at2"/>
<dbReference type="GO" id="GO:0017168">
    <property type="term" value="F:5-oxoprolinase (ATP-hydrolyzing) activity"/>
    <property type="evidence" value="ECO:0007669"/>
    <property type="project" value="UniProtKB-UniRule"/>
</dbReference>
<dbReference type="GO" id="GO:0005524">
    <property type="term" value="F:ATP binding"/>
    <property type="evidence" value="ECO:0007669"/>
    <property type="project" value="UniProtKB-UniRule"/>
</dbReference>
<dbReference type="GO" id="GO:0005975">
    <property type="term" value="P:carbohydrate metabolic process"/>
    <property type="evidence" value="ECO:0007669"/>
    <property type="project" value="InterPro"/>
</dbReference>
<dbReference type="CDD" id="cd10800">
    <property type="entry name" value="LamB_YcsF_YbgL_like"/>
    <property type="match status" value="1"/>
</dbReference>
<dbReference type="Gene3D" id="3.20.20.370">
    <property type="entry name" value="Glycoside hydrolase/deacetylase"/>
    <property type="match status" value="1"/>
</dbReference>
<dbReference type="HAMAP" id="MF_00691">
    <property type="entry name" value="PxpA"/>
    <property type="match status" value="1"/>
</dbReference>
<dbReference type="InterPro" id="IPR011330">
    <property type="entry name" value="Glyco_hydro/deAcase_b/a-brl"/>
</dbReference>
<dbReference type="InterPro" id="IPR005501">
    <property type="entry name" value="LamB/YcsF/PxpA-like"/>
</dbReference>
<dbReference type="NCBIfam" id="NF003812">
    <property type="entry name" value="PRK05406.1-1"/>
    <property type="match status" value="1"/>
</dbReference>
<dbReference type="NCBIfam" id="NF003814">
    <property type="entry name" value="PRK05406.1-3"/>
    <property type="match status" value="1"/>
</dbReference>
<dbReference type="NCBIfam" id="NF003815">
    <property type="entry name" value="PRK05406.1-4"/>
    <property type="match status" value="1"/>
</dbReference>
<dbReference type="NCBIfam" id="NF003816">
    <property type="entry name" value="PRK05406.1-5"/>
    <property type="match status" value="1"/>
</dbReference>
<dbReference type="PANTHER" id="PTHR30292:SF0">
    <property type="entry name" value="5-OXOPROLINASE SUBUNIT A"/>
    <property type="match status" value="1"/>
</dbReference>
<dbReference type="PANTHER" id="PTHR30292">
    <property type="entry name" value="UNCHARACTERIZED PROTEIN YBGL-RELATED"/>
    <property type="match status" value="1"/>
</dbReference>
<dbReference type="Pfam" id="PF03746">
    <property type="entry name" value="LamB_YcsF"/>
    <property type="match status" value="1"/>
</dbReference>
<dbReference type="SUPFAM" id="SSF88713">
    <property type="entry name" value="Glycoside hydrolase/deacetylase"/>
    <property type="match status" value="1"/>
</dbReference>
<sequence>MQIDLNADLGEGCGNDEALLALISSANVACGWHAGDAATMLQTVKWAIEKGVAIGAHPSFPDRENFGRTEMQRDPEAVYADVLYQIGALAAMVRAQGGQLHHVKPHGALYNQAARDPALAEAIVRAVRDFDSDLIFFGLAGSKMIDVARKAGLRVKEEVFADRGYNADGSLVKRGTPGALHEDEEVALNQTLTMVREQRVRAIDGNWVPIRAETVCLHGDGDHALAFARRIRERLGAEGIAVRAGA</sequence>
<name>PXPA_CUPPJ</name>
<organism>
    <name type="scientific">Cupriavidus pinatubonensis (strain JMP 134 / LMG 1197)</name>
    <name type="common">Cupriavidus necator (strain JMP 134)</name>
    <dbReference type="NCBI Taxonomy" id="264198"/>
    <lineage>
        <taxon>Bacteria</taxon>
        <taxon>Pseudomonadati</taxon>
        <taxon>Pseudomonadota</taxon>
        <taxon>Betaproteobacteria</taxon>
        <taxon>Burkholderiales</taxon>
        <taxon>Burkholderiaceae</taxon>
        <taxon>Cupriavidus</taxon>
    </lineage>
</organism>
<accession>Q477G2</accession>
<keyword id="KW-0067">ATP-binding</keyword>
<keyword id="KW-0378">Hydrolase</keyword>
<keyword id="KW-0547">Nucleotide-binding</keyword>
<comment type="function">
    <text evidence="1">Catalyzes the cleavage of 5-oxoproline to form L-glutamate coupled to the hydrolysis of ATP to ADP and inorganic phosphate.</text>
</comment>
<comment type="catalytic activity">
    <reaction evidence="1">
        <text>5-oxo-L-proline + ATP + 2 H2O = L-glutamate + ADP + phosphate + H(+)</text>
        <dbReference type="Rhea" id="RHEA:10348"/>
        <dbReference type="ChEBI" id="CHEBI:15377"/>
        <dbReference type="ChEBI" id="CHEBI:15378"/>
        <dbReference type="ChEBI" id="CHEBI:29985"/>
        <dbReference type="ChEBI" id="CHEBI:30616"/>
        <dbReference type="ChEBI" id="CHEBI:43474"/>
        <dbReference type="ChEBI" id="CHEBI:58402"/>
        <dbReference type="ChEBI" id="CHEBI:456216"/>
        <dbReference type="EC" id="3.5.2.9"/>
    </reaction>
</comment>
<comment type="subunit">
    <text evidence="1">Forms a complex composed of PxpA, PxpB and PxpC.</text>
</comment>
<comment type="similarity">
    <text evidence="1">Belongs to the LamB/PxpA family.</text>
</comment>
<protein>
    <recommendedName>
        <fullName evidence="1">5-oxoprolinase subunit A</fullName>
        <shortName evidence="1">5-OPase subunit A</shortName>
        <ecNumber evidence="1">3.5.2.9</ecNumber>
    </recommendedName>
    <alternativeName>
        <fullName evidence="1">5-oxoprolinase (ATP-hydrolyzing) subunit A</fullName>
    </alternativeName>
</protein>
<proteinExistence type="inferred from homology"/>